<evidence type="ECO:0000255" key="1">
    <source>
        <dbReference type="HAMAP-Rule" id="MF_00151"/>
    </source>
</evidence>
<organism>
    <name type="scientific">Paraburkholderia phytofirmans (strain DSM 17436 / LMG 22146 / PsJN)</name>
    <name type="common">Burkholderia phytofirmans</name>
    <dbReference type="NCBI Taxonomy" id="398527"/>
    <lineage>
        <taxon>Bacteria</taxon>
        <taxon>Pseudomonadati</taxon>
        <taxon>Pseudomonadota</taxon>
        <taxon>Betaproteobacteria</taxon>
        <taxon>Burkholderiales</taxon>
        <taxon>Burkholderiaceae</taxon>
        <taxon>Paraburkholderia</taxon>
    </lineage>
</organism>
<feature type="chain" id="PRO_1000096775" description="Phosphopantetheine adenylyltransferase">
    <location>
        <begin position="1"/>
        <end position="171"/>
    </location>
</feature>
<feature type="binding site" evidence="1">
    <location>
        <begin position="9"/>
        <end position="10"/>
    </location>
    <ligand>
        <name>ATP</name>
        <dbReference type="ChEBI" id="CHEBI:30616"/>
    </ligand>
</feature>
<feature type="binding site" evidence="1">
    <location>
        <position position="9"/>
    </location>
    <ligand>
        <name>substrate</name>
    </ligand>
</feature>
<feature type="binding site" evidence="1">
    <location>
        <position position="17"/>
    </location>
    <ligand>
        <name>ATP</name>
        <dbReference type="ChEBI" id="CHEBI:30616"/>
    </ligand>
</feature>
<feature type="binding site" evidence="1">
    <location>
        <position position="41"/>
    </location>
    <ligand>
        <name>substrate</name>
    </ligand>
</feature>
<feature type="binding site" evidence="1">
    <location>
        <position position="73"/>
    </location>
    <ligand>
        <name>substrate</name>
    </ligand>
</feature>
<feature type="binding site" evidence="1">
    <location>
        <position position="87"/>
    </location>
    <ligand>
        <name>substrate</name>
    </ligand>
</feature>
<feature type="binding site" evidence="1">
    <location>
        <begin position="88"/>
        <end position="90"/>
    </location>
    <ligand>
        <name>ATP</name>
        <dbReference type="ChEBI" id="CHEBI:30616"/>
    </ligand>
</feature>
<feature type="binding site" evidence="1">
    <location>
        <position position="98"/>
    </location>
    <ligand>
        <name>ATP</name>
        <dbReference type="ChEBI" id="CHEBI:30616"/>
    </ligand>
</feature>
<feature type="binding site" evidence="1">
    <location>
        <begin position="123"/>
        <end position="129"/>
    </location>
    <ligand>
        <name>ATP</name>
        <dbReference type="ChEBI" id="CHEBI:30616"/>
    </ligand>
</feature>
<feature type="site" description="Transition state stabilizer" evidence="1">
    <location>
        <position position="17"/>
    </location>
</feature>
<proteinExistence type="inferred from homology"/>
<protein>
    <recommendedName>
        <fullName evidence="1">Phosphopantetheine adenylyltransferase</fullName>
        <ecNumber evidence="1">2.7.7.3</ecNumber>
    </recommendedName>
    <alternativeName>
        <fullName evidence="1">Dephospho-CoA pyrophosphorylase</fullName>
    </alternativeName>
    <alternativeName>
        <fullName evidence="1">Pantetheine-phosphate adenylyltransferase</fullName>
        <shortName evidence="1">PPAT</shortName>
    </alternativeName>
</protein>
<sequence length="171" mass="19111">MVVAVYPGTFDPLTRGHEDLVRRASSIFDTLVVGVADSRNKKPFFTLEERLDIAHEVLGHYPNVQVMSFKGLLKDFVRTNNARVIVRGLRAVSDFEYEFQMAGMNRYLLPDVETMFMTPSDQYQFISGTIVREIAQLGGDVSKFVFPSVEKWLTEKVAAMDPASGASAGQP</sequence>
<reference key="1">
    <citation type="journal article" date="2011" name="J. Bacteriol.">
        <title>Complete genome sequence of the plant growth-promoting endophyte Burkholderia phytofirmans strain PsJN.</title>
        <authorList>
            <person name="Weilharter A."/>
            <person name="Mitter B."/>
            <person name="Shin M.V."/>
            <person name="Chain P.S."/>
            <person name="Nowak J."/>
            <person name="Sessitsch A."/>
        </authorList>
    </citation>
    <scope>NUCLEOTIDE SEQUENCE [LARGE SCALE GENOMIC DNA]</scope>
    <source>
        <strain>DSM 17436 / LMG 22146 / PsJN</strain>
    </source>
</reference>
<accession>B2SXG0</accession>
<keyword id="KW-0067">ATP-binding</keyword>
<keyword id="KW-0173">Coenzyme A biosynthesis</keyword>
<keyword id="KW-0963">Cytoplasm</keyword>
<keyword id="KW-0460">Magnesium</keyword>
<keyword id="KW-0547">Nucleotide-binding</keyword>
<keyword id="KW-0548">Nucleotidyltransferase</keyword>
<keyword id="KW-0808">Transferase</keyword>
<gene>
    <name evidence="1" type="primary">coaD</name>
    <name type="ordered locus">Bphyt_0580</name>
</gene>
<dbReference type="EC" id="2.7.7.3" evidence="1"/>
<dbReference type="EMBL" id="CP001052">
    <property type="protein sequence ID" value="ACD15005.1"/>
    <property type="molecule type" value="Genomic_DNA"/>
</dbReference>
<dbReference type="RefSeq" id="WP_012431643.1">
    <property type="nucleotide sequence ID" value="NC_010681.1"/>
</dbReference>
<dbReference type="SMR" id="B2SXG0"/>
<dbReference type="STRING" id="398527.Bphyt_0580"/>
<dbReference type="GeneID" id="97305852"/>
<dbReference type="KEGG" id="bpy:Bphyt_0580"/>
<dbReference type="eggNOG" id="COG0669">
    <property type="taxonomic scope" value="Bacteria"/>
</dbReference>
<dbReference type="HOGENOM" id="CLU_100149_0_1_4"/>
<dbReference type="OrthoDB" id="9806661at2"/>
<dbReference type="UniPathway" id="UPA00241">
    <property type="reaction ID" value="UER00355"/>
</dbReference>
<dbReference type="Proteomes" id="UP000001739">
    <property type="component" value="Chromosome 1"/>
</dbReference>
<dbReference type="GO" id="GO:0005737">
    <property type="term" value="C:cytoplasm"/>
    <property type="evidence" value="ECO:0007669"/>
    <property type="project" value="UniProtKB-SubCell"/>
</dbReference>
<dbReference type="GO" id="GO:0005524">
    <property type="term" value="F:ATP binding"/>
    <property type="evidence" value="ECO:0007669"/>
    <property type="project" value="UniProtKB-KW"/>
</dbReference>
<dbReference type="GO" id="GO:0004595">
    <property type="term" value="F:pantetheine-phosphate adenylyltransferase activity"/>
    <property type="evidence" value="ECO:0007669"/>
    <property type="project" value="UniProtKB-UniRule"/>
</dbReference>
<dbReference type="GO" id="GO:0015937">
    <property type="term" value="P:coenzyme A biosynthetic process"/>
    <property type="evidence" value="ECO:0007669"/>
    <property type="project" value="UniProtKB-UniRule"/>
</dbReference>
<dbReference type="CDD" id="cd02163">
    <property type="entry name" value="PPAT"/>
    <property type="match status" value="1"/>
</dbReference>
<dbReference type="Gene3D" id="3.40.50.620">
    <property type="entry name" value="HUPs"/>
    <property type="match status" value="1"/>
</dbReference>
<dbReference type="HAMAP" id="MF_00151">
    <property type="entry name" value="PPAT_bact"/>
    <property type="match status" value="1"/>
</dbReference>
<dbReference type="InterPro" id="IPR004821">
    <property type="entry name" value="Cyt_trans-like"/>
</dbReference>
<dbReference type="InterPro" id="IPR001980">
    <property type="entry name" value="PPAT"/>
</dbReference>
<dbReference type="InterPro" id="IPR014729">
    <property type="entry name" value="Rossmann-like_a/b/a_fold"/>
</dbReference>
<dbReference type="NCBIfam" id="TIGR01510">
    <property type="entry name" value="coaD_prev_kdtB"/>
    <property type="match status" value="1"/>
</dbReference>
<dbReference type="NCBIfam" id="TIGR00125">
    <property type="entry name" value="cyt_tran_rel"/>
    <property type="match status" value="1"/>
</dbReference>
<dbReference type="PANTHER" id="PTHR21342">
    <property type="entry name" value="PHOSPHOPANTETHEINE ADENYLYLTRANSFERASE"/>
    <property type="match status" value="1"/>
</dbReference>
<dbReference type="PANTHER" id="PTHR21342:SF1">
    <property type="entry name" value="PHOSPHOPANTETHEINE ADENYLYLTRANSFERASE"/>
    <property type="match status" value="1"/>
</dbReference>
<dbReference type="Pfam" id="PF01467">
    <property type="entry name" value="CTP_transf_like"/>
    <property type="match status" value="1"/>
</dbReference>
<dbReference type="PRINTS" id="PR01020">
    <property type="entry name" value="LPSBIOSNTHSS"/>
</dbReference>
<dbReference type="SUPFAM" id="SSF52374">
    <property type="entry name" value="Nucleotidylyl transferase"/>
    <property type="match status" value="1"/>
</dbReference>
<comment type="function">
    <text evidence="1">Reversibly transfers an adenylyl group from ATP to 4'-phosphopantetheine, yielding dephospho-CoA (dPCoA) and pyrophosphate.</text>
</comment>
<comment type="catalytic activity">
    <reaction evidence="1">
        <text>(R)-4'-phosphopantetheine + ATP + H(+) = 3'-dephospho-CoA + diphosphate</text>
        <dbReference type="Rhea" id="RHEA:19801"/>
        <dbReference type="ChEBI" id="CHEBI:15378"/>
        <dbReference type="ChEBI" id="CHEBI:30616"/>
        <dbReference type="ChEBI" id="CHEBI:33019"/>
        <dbReference type="ChEBI" id="CHEBI:57328"/>
        <dbReference type="ChEBI" id="CHEBI:61723"/>
        <dbReference type="EC" id="2.7.7.3"/>
    </reaction>
</comment>
<comment type="cofactor">
    <cofactor evidence="1">
        <name>Mg(2+)</name>
        <dbReference type="ChEBI" id="CHEBI:18420"/>
    </cofactor>
</comment>
<comment type="pathway">
    <text evidence="1">Cofactor biosynthesis; coenzyme A biosynthesis; CoA from (R)-pantothenate: step 4/5.</text>
</comment>
<comment type="subunit">
    <text evidence="1">Homohexamer.</text>
</comment>
<comment type="subcellular location">
    <subcellularLocation>
        <location evidence="1">Cytoplasm</location>
    </subcellularLocation>
</comment>
<comment type="similarity">
    <text evidence="1">Belongs to the bacterial CoaD family.</text>
</comment>
<name>COAD_PARPJ</name>